<comment type="function">
    <text evidence="1">Catalyzes the phosphorylation of the hydroxyl group of 4-methyl-5-beta-hydroxyethylthiazole (THZ).</text>
</comment>
<comment type="catalytic activity">
    <reaction evidence="1">
        <text>5-(2-hydroxyethyl)-4-methylthiazole + ATP = 4-methyl-5-(2-phosphooxyethyl)-thiazole + ADP + H(+)</text>
        <dbReference type="Rhea" id="RHEA:24212"/>
        <dbReference type="ChEBI" id="CHEBI:15378"/>
        <dbReference type="ChEBI" id="CHEBI:17957"/>
        <dbReference type="ChEBI" id="CHEBI:30616"/>
        <dbReference type="ChEBI" id="CHEBI:58296"/>
        <dbReference type="ChEBI" id="CHEBI:456216"/>
        <dbReference type="EC" id="2.7.1.50"/>
    </reaction>
</comment>
<comment type="cofactor">
    <cofactor evidence="1">
        <name>Mg(2+)</name>
        <dbReference type="ChEBI" id="CHEBI:18420"/>
    </cofactor>
</comment>
<comment type="pathway">
    <text evidence="1">Cofactor biosynthesis; thiamine diphosphate biosynthesis; 4-methyl-5-(2-phosphoethyl)-thiazole from 5-(2-hydroxyethyl)-4-methylthiazole: step 1/1.</text>
</comment>
<comment type="similarity">
    <text evidence="1">Belongs to the Thz kinase family.</text>
</comment>
<feature type="chain" id="PRO_1000021527" description="Hydroxyethylthiazole kinase">
    <location>
        <begin position="1"/>
        <end position="262"/>
    </location>
</feature>
<feature type="binding site" evidence="1">
    <location>
        <position position="50"/>
    </location>
    <ligand>
        <name>substrate</name>
    </ligand>
</feature>
<feature type="binding site" evidence="1">
    <location>
        <position position="125"/>
    </location>
    <ligand>
        <name>ATP</name>
        <dbReference type="ChEBI" id="CHEBI:30616"/>
    </ligand>
</feature>
<feature type="binding site" evidence="1">
    <location>
        <position position="171"/>
    </location>
    <ligand>
        <name>ATP</name>
        <dbReference type="ChEBI" id="CHEBI:30616"/>
    </ligand>
</feature>
<feature type="binding site" evidence="1">
    <location>
        <position position="198"/>
    </location>
    <ligand>
        <name>substrate</name>
    </ligand>
</feature>
<reference key="1">
    <citation type="journal article" date="2005" name="Nucleic Acids Res.">
        <title>Genome dynamics and diversity of Shigella species, the etiologic agents of bacillary dysentery.</title>
        <authorList>
            <person name="Yang F."/>
            <person name="Yang J."/>
            <person name="Zhang X."/>
            <person name="Chen L."/>
            <person name="Jiang Y."/>
            <person name="Yan Y."/>
            <person name="Tang X."/>
            <person name="Wang J."/>
            <person name="Xiong Z."/>
            <person name="Dong J."/>
            <person name="Xue Y."/>
            <person name="Zhu Y."/>
            <person name="Xu X."/>
            <person name="Sun L."/>
            <person name="Chen S."/>
            <person name="Nie H."/>
            <person name="Peng J."/>
            <person name="Xu J."/>
            <person name="Wang Y."/>
            <person name="Yuan Z."/>
            <person name="Wen Y."/>
            <person name="Yao Z."/>
            <person name="Shen Y."/>
            <person name="Qiang B."/>
            <person name="Hou Y."/>
            <person name="Yu J."/>
            <person name="Jin Q."/>
        </authorList>
    </citation>
    <scope>NUCLEOTIDE SEQUENCE [LARGE SCALE GENOMIC DNA]</scope>
    <source>
        <strain>Sb227</strain>
    </source>
</reference>
<accession>Q323B8</accession>
<gene>
    <name evidence="1" type="primary">thiM</name>
    <name type="ordered locus">SBO_0925</name>
</gene>
<name>THIM_SHIBS</name>
<protein>
    <recommendedName>
        <fullName evidence="1">Hydroxyethylthiazole kinase</fullName>
        <ecNumber evidence="1">2.7.1.50</ecNumber>
    </recommendedName>
    <alternativeName>
        <fullName evidence="1">4-methyl-5-beta-hydroxyethylthiazole kinase</fullName>
        <shortName evidence="1">TH kinase</shortName>
        <shortName evidence="1">Thz kinase</shortName>
    </alternativeName>
</protein>
<proteinExistence type="inferred from homology"/>
<dbReference type="EC" id="2.7.1.50" evidence="1"/>
<dbReference type="EMBL" id="CP000036">
    <property type="protein sequence ID" value="ABB65590.1"/>
    <property type="molecule type" value="Genomic_DNA"/>
</dbReference>
<dbReference type="RefSeq" id="WP_001195644.1">
    <property type="nucleotide sequence ID" value="NC_007613.1"/>
</dbReference>
<dbReference type="SMR" id="Q323B8"/>
<dbReference type="KEGG" id="sbo:SBO_0925"/>
<dbReference type="HOGENOM" id="CLU_019943_0_1_6"/>
<dbReference type="UniPathway" id="UPA00060">
    <property type="reaction ID" value="UER00139"/>
</dbReference>
<dbReference type="Proteomes" id="UP000007067">
    <property type="component" value="Chromosome"/>
</dbReference>
<dbReference type="GO" id="GO:0005524">
    <property type="term" value="F:ATP binding"/>
    <property type="evidence" value="ECO:0007669"/>
    <property type="project" value="UniProtKB-UniRule"/>
</dbReference>
<dbReference type="GO" id="GO:0004417">
    <property type="term" value="F:hydroxyethylthiazole kinase activity"/>
    <property type="evidence" value="ECO:0007669"/>
    <property type="project" value="UniProtKB-UniRule"/>
</dbReference>
<dbReference type="GO" id="GO:0000287">
    <property type="term" value="F:magnesium ion binding"/>
    <property type="evidence" value="ECO:0007669"/>
    <property type="project" value="UniProtKB-UniRule"/>
</dbReference>
<dbReference type="GO" id="GO:0009228">
    <property type="term" value="P:thiamine biosynthetic process"/>
    <property type="evidence" value="ECO:0007669"/>
    <property type="project" value="UniProtKB-KW"/>
</dbReference>
<dbReference type="GO" id="GO:0009229">
    <property type="term" value="P:thiamine diphosphate biosynthetic process"/>
    <property type="evidence" value="ECO:0007669"/>
    <property type="project" value="UniProtKB-UniRule"/>
</dbReference>
<dbReference type="CDD" id="cd01170">
    <property type="entry name" value="THZ_kinase"/>
    <property type="match status" value="1"/>
</dbReference>
<dbReference type="FunFam" id="3.40.1190.20:FF:000015">
    <property type="entry name" value="Hydroxyethylthiazole kinase"/>
    <property type="match status" value="1"/>
</dbReference>
<dbReference type="Gene3D" id="3.40.1190.20">
    <property type="match status" value="1"/>
</dbReference>
<dbReference type="HAMAP" id="MF_00228">
    <property type="entry name" value="Thz_kinase"/>
    <property type="match status" value="1"/>
</dbReference>
<dbReference type="InterPro" id="IPR000417">
    <property type="entry name" value="Hyethyz_kinase"/>
</dbReference>
<dbReference type="InterPro" id="IPR029056">
    <property type="entry name" value="Ribokinase-like"/>
</dbReference>
<dbReference type="NCBIfam" id="NF006830">
    <property type="entry name" value="PRK09355.1"/>
    <property type="match status" value="1"/>
</dbReference>
<dbReference type="NCBIfam" id="TIGR00694">
    <property type="entry name" value="thiM"/>
    <property type="match status" value="1"/>
</dbReference>
<dbReference type="Pfam" id="PF02110">
    <property type="entry name" value="HK"/>
    <property type="match status" value="1"/>
</dbReference>
<dbReference type="PIRSF" id="PIRSF000513">
    <property type="entry name" value="Thz_kinase"/>
    <property type="match status" value="1"/>
</dbReference>
<dbReference type="PRINTS" id="PR01099">
    <property type="entry name" value="HYETHTZKNASE"/>
</dbReference>
<dbReference type="SUPFAM" id="SSF53613">
    <property type="entry name" value="Ribokinase-like"/>
    <property type="match status" value="1"/>
</dbReference>
<keyword id="KW-0067">ATP-binding</keyword>
<keyword id="KW-0418">Kinase</keyword>
<keyword id="KW-0460">Magnesium</keyword>
<keyword id="KW-0479">Metal-binding</keyword>
<keyword id="KW-0547">Nucleotide-binding</keyword>
<keyword id="KW-0784">Thiamine biosynthesis</keyword>
<keyword id="KW-0808">Transferase</keyword>
<evidence type="ECO:0000255" key="1">
    <source>
        <dbReference type="HAMAP-Rule" id="MF_00228"/>
    </source>
</evidence>
<sequence length="262" mass="27388">MQVDLQSSAQSAHALHLFHQHSPLVHCMTNDVVQTFTANTLLALGASPAMVIETEEASQFAAIASALLINVGTLTQLRAQSMCAAVEQAKSSQTPWTLDPVAVGALDYRRRFCLELLPHKPTAIRGNASEIMALAGIANGGRGVDTTDAAANAIPAAQTLARETGAIVVVTGEMDYVTDGHRIIGIHGGDPLMTKVVGTGCALSAVVAACCALPGDTLENVASACHWMKQAGERAVARSEGPGSFVPHFLDALWQLTQEVQA</sequence>
<organism>
    <name type="scientific">Shigella boydii serotype 4 (strain Sb227)</name>
    <dbReference type="NCBI Taxonomy" id="300268"/>
    <lineage>
        <taxon>Bacteria</taxon>
        <taxon>Pseudomonadati</taxon>
        <taxon>Pseudomonadota</taxon>
        <taxon>Gammaproteobacteria</taxon>
        <taxon>Enterobacterales</taxon>
        <taxon>Enterobacteriaceae</taxon>
        <taxon>Shigella</taxon>
    </lineage>
</organism>